<feature type="signal peptide" evidence="2">
    <location>
        <begin position="1" status="less than"/>
        <end position="17"/>
    </location>
</feature>
<feature type="propeptide" id="PRO_0000392140" evidence="1">
    <location>
        <begin position="18"/>
        <end position="41"/>
    </location>
</feature>
<feature type="peptide" id="PRO_0000392141" description="Conotoxin LvVIA">
    <location>
        <begin position="43"/>
        <end position="72"/>
    </location>
</feature>
<feature type="disulfide bond" evidence="1">
    <location>
        <begin position="44"/>
        <end position="58"/>
    </location>
</feature>
<feature type="disulfide bond" evidence="1">
    <location>
        <begin position="51"/>
        <end position="63"/>
    </location>
</feature>
<feature type="disulfide bond" evidence="1">
    <location>
        <begin position="57"/>
        <end position="70"/>
    </location>
</feature>
<feature type="sequence conflict" description="In Ref. 1 and 2; AAD48214." evidence="3" ref="1 2">
    <original>I</original>
    <variation>V</variation>
    <location>
        <position position="4"/>
    </location>
</feature>
<feature type="sequence conflict" description="In Ref. 1 and 2; AAD48214." evidence="3" ref="1 2">
    <original>L</original>
    <variation>P</variation>
    <location>
        <position position="7"/>
    </location>
</feature>
<feature type="sequence conflict" description="In Ref. 1 and 2; AAD48161." evidence="3" ref="1 2">
    <original>A</original>
    <variation>D</variation>
    <location>
        <position position="11"/>
    </location>
</feature>
<feature type="sequence conflict" description="In Ref. 1 and 2; AAD48167." evidence="3" ref="1 2">
    <original>A</original>
    <variation>G</variation>
    <location>
        <position position="11"/>
    </location>
</feature>
<feature type="sequence conflict" description="In Ref. 1 and 2; AAD48214." evidence="3" ref="1 2">
    <original>S</original>
    <variation>G</variation>
    <location>
        <position position="12"/>
    </location>
</feature>
<feature type="sequence conflict" description="In Ref. 1 and 2; AAD48160." evidence="3" ref="1 2">
    <original>Y</original>
    <variation>N</variation>
    <location>
        <position position="26"/>
    </location>
</feature>
<feature type="sequence conflict" description="In Ref. 1 and 2; AAD48207." evidence="3" ref="1 2">
    <original>A</original>
    <variation>T</variation>
    <location>
        <position position="29"/>
    </location>
</feature>
<feature type="sequence conflict" description="In Ref. 1 and 2; AAD48207." evidence="3" ref="1 2">
    <original>R</original>
    <variation>G</variation>
    <location>
        <position position="42"/>
    </location>
</feature>
<feature type="sequence conflict" description="In Ref. 1 and 2; AAD48211." evidence="3" ref="1 2">
    <original>R</original>
    <variation>W</variation>
    <location>
        <position position="42"/>
    </location>
</feature>
<feature type="sequence conflict" description="In Ref. 1 and 2; AAD48210." evidence="3" ref="1 2">
    <original>S</original>
    <variation>T</variation>
    <location>
        <position position="64"/>
    </location>
</feature>
<feature type="non-terminal residue">
    <location>
        <position position="1"/>
    </location>
</feature>
<evidence type="ECO:0000250" key="1"/>
<evidence type="ECO:0000255" key="2"/>
<evidence type="ECO:0000305" key="3"/>
<comment type="subcellular location">
    <subcellularLocation>
        <location evidence="1">Secreted</location>
    </subcellularLocation>
</comment>
<comment type="tissue specificity">
    <text>Expressed by the venom duct.</text>
</comment>
<comment type="domain">
    <text evidence="1">The presence of a 'disulfide through disulfide knot' structurally defines this protein as a knottin.</text>
</comment>
<comment type="domain">
    <text>The cysteine framework is VI/VII (C-C-CC-C-C).</text>
</comment>
<comment type="similarity">
    <text evidence="3">Belongs to the conotoxin O1 superfamily.</text>
</comment>
<sequence length="72" mass="7984">VLIIAVLFLTASELVTADYTRDKWQYRAASLRDAMRNFRDTRTCSPAGEVCTSKSPCCTGFLCSHIGGMCHH</sequence>
<reference key="1">
    <citation type="journal article" date="1999" name="Proc. Natl. Acad. Sci. U.S.A.">
        <title>Molecular genetics of ecological diversification: duplication and rapid evolution of toxin genes of the venomous gastropod Conus.</title>
        <authorList>
            <person name="Duda T.F. Jr."/>
            <person name="Palumbi S.R."/>
        </authorList>
    </citation>
    <scope>NUCLEOTIDE SEQUENCE [MRNA]</scope>
    <source>
        <tissue>Venom duct</tissue>
    </source>
</reference>
<reference key="2">
    <citation type="journal article" date="2004" name="Proc. R. Soc. B">
        <title>Gene expression and feeding ecology: evolution of piscivory in the venomous gastropod genus Conus.</title>
        <authorList>
            <person name="Duda T.F. Jr."/>
            <person name="Palumbi S.R."/>
        </authorList>
    </citation>
    <scope>NUCLEOTIDE SEQUENCE [MRNA]</scope>
    <source>
        <tissue>Venom duct</tissue>
    </source>
</reference>
<organism>
    <name type="scientific">Conus lividus</name>
    <name type="common">Livid cone</name>
    <dbReference type="NCBI Taxonomy" id="89426"/>
    <lineage>
        <taxon>Eukaryota</taxon>
        <taxon>Metazoa</taxon>
        <taxon>Spiralia</taxon>
        <taxon>Lophotrochozoa</taxon>
        <taxon>Mollusca</taxon>
        <taxon>Gastropoda</taxon>
        <taxon>Caenogastropoda</taxon>
        <taxon>Neogastropoda</taxon>
        <taxon>Conoidea</taxon>
        <taxon>Conidae</taxon>
        <taxon>Conus</taxon>
        <taxon>Lividoconus</taxon>
    </lineage>
</organism>
<dbReference type="EMBL" id="AF089902">
    <property type="protein sequence ID" value="AAD48158.1"/>
    <property type="molecule type" value="mRNA"/>
</dbReference>
<dbReference type="EMBL" id="AF089904">
    <property type="protein sequence ID" value="AAD48160.1"/>
    <property type="molecule type" value="mRNA"/>
</dbReference>
<dbReference type="EMBL" id="AF089905">
    <property type="protein sequence ID" value="AAD48161.1"/>
    <property type="molecule type" value="mRNA"/>
</dbReference>
<dbReference type="EMBL" id="AF089906">
    <property type="protein sequence ID" value="AAD48162.1"/>
    <property type="molecule type" value="mRNA"/>
</dbReference>
<dbReference type="EMBL" id="AF089907">
    <property type="protein sequence ID" value="AAD48163.1"/>
    <property type="molecule type" value="mRNA"/>
</dbReference>
<dbReference type="EMBL" id="AF089910">
    <property type="protein sequence ID" value="AAD48165.1"/>
    <property type="molecule type" value="mRNA"/>
</dbReference>
<dbReference type="EMBL" id="AF089912">
    <property type="protein sequence ID" value="AAD48167.1"/>
    <property type="molecule type" value="mRNA"/>
</dbReference>
<dbReference type="EMBL" id="AF089913">
    <property type="protein sequence ID" value="AAD48168.1"/>
    <property type="molecule type" value="mRNA"/>
</dbReference>
<dbReference type="EMBL" id="AF089914">
    <property type="protein sequence ID" value="AAD48169.1"/>
    <property type="molecule type" value="mRNA"/>
</dbReference>
<dbReference type="EMBL" id="AF089915">
    <property type="protein sequence ID" value="AAD48170.1"/>
    <property type="molecule type" value="mRNA"/>
</dbReference>
<dbReference type="EMBL" id="AF089916">
    <property type="protein sequence ID" value="AAD48171.1"/>
    <property type="molecule type" value="mRNA"/>
</dbReference>
<dbReference type="EMBL" id="AF089917">
    <property type="protein sequence ID" value="AAD48172.1"/>
    <property type="molecule type" value="mRNA"/>
</dbReference>
<dbReference type="EMBL" id="AF089918">
    <property type="protein sequence ID" value="AAD48173.1"/>
    <property type="molecule type" value="mRNA"/>
</dbReference>
<dbReference type="EMBL" id="AF089919">
    <property type="protein sequence ID" value="AAD48174.1"/>
    <property type="molecule type" value="mRNA"/>
</dbReference>
<dbReference type="EMBL" id="AF089920">
    <property type="protein sequence ID" value="AAD48175.1"/>
    <property type="molecule type" value="mRNA"/>
</dbReference>
<dbReference type="EMBL" id="AF089921">
    <property type="protein sequence ID" value="AAD48176.1"/>
    <property type="molecule type" value="mRNA"/>
</dbReference>
<dbReference type="EMBL" id="AF089922">
    <property type="protein sequence ID" value="AAD48177.1"/>
    <property type="molecule type" value="mRNA"/>
</dbReference>
<dbReference type="EMBL" id="AF089923">
    <property type="protein sequence ID" value="AAD48178.1"/>
    <property type="molecule type" value="mRNA"/>
</dbReference>
<dbReference type="EMBL" id="AF089924">
    <property type="protein sequence ID" value="AAD48179.1"/>
    <property type="molecule type" value="mRNA"/>
</dbReference>
<dbReference type="EMBL" id="AF089925">
    <property type="protein sequence ID" value="AAD48180.1"/>
    <property type="molecule type" value="mRNA"/>
</dbReference>
<dbReference type="EMBL" id="AF089926">
    <property type="protein sequence ID" value="AAD48181.1"/>
    <property type="molecule type" value="mRNA"/>
</dbReference>
<dbReference type="EMBL" id="AF089927">
    <property type="protein sequence ID" value="AAD48182.1"/>
    <property type="molecule type" value="mRNA"/>
</dbReference>
<dbReference type="EMBL" id="AF089928">
    <property type="protein sequence ID" value="AAD48183.1"/>
    <property type="molecule type" value="mRNA"/>
</dbReference>
<dbReference type="EMBL" id="AF089929">
    <property type="protein sequence ID" value="AAD48184.1"/>
    <property type="molecule type" value="mRNA"/>
</dbReference>
<dbReference type="EMBL" id="AF089930">
    <property type="protein sequence ID" value="AAD48185.1"/>
    <property type="molecule type" value="mRNA"/>
</dbReference>
<dbReference type="EMBL" id="AF089931">
    <property type="protein sequence ID" value="AAD48186.1"/>
    <property type="molecule type" value="mRNA"/>
</dbReference>
<dbReference type="EMBL" id="AF089932">
    <property type="protein sequence ID" value="AAD48187.1"/>
    <property type="molecule type" value="mRNA"/>
</dbReference>
<dbReference type="EMBL" id="AF089933">
    <property type="protein sequence ID" value="AAD48188.1"/>
    <property type="molecule type" value="mRNA"/>
</dbReference>
<dbReference type="EMBL" id="AF089941">
    <property type="protein sequence ID" value="AAD48196.1"/>
    <property type="molecule type" value="mRNA"/>
</dbReference>
<dbReference type="EMBL" id="AF089942">
    <property type="protein sequence ID" value="AAD48197.1"/>
    <property type="molecule type" value="mRNA"/>
</dbReference>
<dbReference type="EMBL" id="AF089943">
    <property type="protein sequence ID" value="AAD48198.1"/>
    <property type="molecule type" value="mRNA"/>
</dbReference>
<dbReference type="EMBL" id="AF089944">
    <property type="protein sequence ID" value="AAD48199.1"/>
    <property type="molecule type" value="mRNA"/>
</dbReference>
<dbReference type="EMBL" id="AF089945">
    <property type="protein sequence ID" value="AAD48200.1"/>
    <property type="molecule type" value="mRNA"/>
</dbReference>
<dbReference type="EMBL" id="AF089946">
    <property type="protein sequence ID" value="AAD48201.1"/>
    <property type="molecule type" value="mRNA"/>
</dbReference>
<dbReference type="EMBL" id="AF089947">
    <property type="protein sequence ID" value="AAD48202.1"/>
    <property type="molecule type" value="mRNA"/>
</dbReference>
<dbReference type="EMBL" id="AF089948">
    <property type="protein sequence ID" value="AAD48203.1"/>
    <property type="molecule type" value="mRNA"/>
</dbReference>
<dbReference type="EMBL" id="AF089949">
    <property type="protein sequence ID" value="AAD48204.1"/>
    <property type="molecule type" value="mRNA"/>
</dbReference>
<dbReference type="EMBL" id="AF089950">
    <property type="protein sequence ID" value="AAD48205.1"/>
    <property type="molecule type" value="mRNA"/>
</dbReference>
<dbReference type="EMBL" id="AF089951">
    <property type="protein sequence ID" value="AAD48206.1"/>
    <property type="molecule type" value="mRNA"/>
</dbReference>
<dbReference type="EMBL" id="AF089952">
    <property type="protein sequence ID" value="AAD48207.1"/>
    <property type="molecule type" value="mRNA"/>
</dbReference>
<dbReference type="EMBL" id="AF089953">
    <property type="protein sequence ID" value="AAD48208.1"/>
    <property type="molecule type" value="mRNA"/>
</dbReference>
<dbReference type="EMBL" id="AF089954">
    <property type="protein sequence ID" value="AAD48209.1"/>
    <property type="molecule type" value="mRNA"/>
</dbReference>
<dbReference type="EMBL" id="AF089955">
    <property type="protein sequence ID" value="AAD48210.1"/>
    <property type="molecule type" value="mRNA"/>
</dbReference>
<dbReference type="EMBL" id="AF089956">
    <property type="protein sequence ID" value="AAD48211.1"/>
    <property type="molecule type" value="mRNA"/>
</dbReference>
<dbReference type="EMBL" id="AF089958">
    <property type="protein sequence ID" value="AAD48213.1"/>
    <property type="molecule type" value="mRNA"/>
</dbReference>
<dbReference type="EMBL" id="AF089959">
    <property type="protein sequence ID" value="AAD48214.1"/>
    <property type="molecule type" value="mRNA"/>
</dbReference>
<dbReference type="SMR" id="Q9TVN1"/>
<dbReference type="ConoServer" id="880">
    <property type="toxin name" value="LvVIA 1 precursor"/>
</dbReference>
<dbReference type="ConoServer" id="882">
    <property type="toxin name" value="LvVIA 1 precursor"/>
</dbReference>
<dbReference type="ConoServer" id="883">
    <property type="toxin name" value="LvVIA 1 precursor"/>
</dbReference>
<dbReference type="ConoServer" id="889">
    <property type="toxin name" value="LvVIA 1 precursor"/>
</dbReference>
<dbReference type="ConoServer" id="929">
    <property type="toxin name" value="LvVIA 1 precursor"/>
</dbReference>
<dbReference type="ConoServer" id="933">
    <property type="toxin name" value="LvVIA 1 precursor"/>
</dbReference>
<dbReference type="ConoServer" id="936">
    <property type="toxin name" value="LvVIA 1 precursor"/>
</dbReference>
<dbReference type="ConoServer" id="932">
    <property type="toxin name" value="LvVIA 2 precursor"/>
</dbReference>
<dbReference type="GO" id="GO:0005576">
    <property type="term" value="C:extracellular region"/>
    <property type="evidence" value="ECO:0007669"/>
    <property type="project" value="UniProtKB-SubCell"/>
</dbReference>
<dbReference type="GO" id="GO:0008200">
    <property type="term" value="F:ion channel inhibitor activity"/>
    <property type="evidence" value="ECO:0007669"/>
    <property type="project" value="InterPro"/>
</dbReference>
<dbReference type="GO" id="GO:0090729">
    <property type="term" value="F:toxin activity"/>
    <property type="evidence" value="ECO:0007669"/>
    <property type="project" value="UniProtKB-KW"/>
</dbReference>
<dbReference type="InterPro" id="IPR004214">
    <property type="entry name" value="Conotoxin"/>
</dbReference>
<dbReference type="Pfam" id="PF02950">
    <property type="entry name" value="Conotoxin"/>
    <property type="match status" value="1"/>
</dbReference>
<name>O16A_CONLI</name>
<accession>Q9TVN1</accession>
<accession>Q9UAA2</accession>
<accession>Q9UAA3</accession>
<accession>Q9UAA4</accession>
<accession>Q9UAA5</accession>
<accession>Q9UAA7</accession>
<accession>Q9UAB0</accession>
<accession>Q9UAB1</accession>
<proteinExistence type="evidence at transcript level"/>
<protein>
    <recommendedName>
        <fullName>Conotoxin LvVIA</fullName>
    </recommendedName>
</protein>
<keyword id="KW-1015">Disulfide bond</keyword>
<keyword id="KW-0960">Knottin</keyword>
<keyword id="KW-0964">Secreted</keyword>
<keyword id="KW-0732">Signal</keyword>
<keyword id="KW-0800">Toxin</keyword>